<dbReference type="EC" id="7.1.1.-" evidence="1"/>
<dbReference type="EMBL" id="CP001277">
    <property type="protein sequence ID" value="ACQ68224.1"/>
    <property type="molecule type" value="Genomic_DNA"/>
</dbReference>
<dbReference type="RefSeq" id="WP_015873991.1">
    <property type="nucleotide sequence ID" value="NC_012751.1"/>
</dbReference>
<dbReference type="SMR" id="C4K6N1"/>
<dbReference type="STRING" id="572265.HDEF_1612"/>
<dbReference type="GeneID" id="66261222"/>
<dbReference type="KEGG" id="hde:HDEF_1612"/>
<dbReference type="eggNOG" id="COG0713">
    <property type="taxonomic scope" value="Bacteria"/>
</dbReference>
<dbReference type="HOGENOM" id="CLU_144724_0_1_6"/>
<dbReference type="Proteomes" id="UP000002334">
    <property type="component" value="Chromosome"/>
</dbReference>
<dbReference type="GO" id="GO:0030964">
    <property type="term" value="C:NADH dehydrogenase complex"/>
    <property type="evidence" value="ECO:0007669"/>
    <property type="project" value="TreeGrafter"/>
</dbReference>
<dbReference type="GO" id="GO:0005886">
    <property type="term" value="C:plasma membrane"/>
    <property type="evidence" value="ECO:0007669"/>
    <property type="project" value="UniProtKB-SubCell"/>
</dbReference>
<dbReference type="GO" id="GO:0050136">
    <property type="term" value="F:NADH:ubiquinone reductase (non-electrogenic) activity"/>
    <property type="evidence" value="ECO:0007669"/>
    <property type="project" value="UniProtKB-UniRule"/>
</dbReference>
<dbReference type="GO" id="GO:0048038">
    <property type="term" value="F:quinone binding"/>
    <property type="evidence" value="ECO:0007669"/>
    <property type="project" value="UniProtKB-KW"/>
</dbReference>
<dbReference type="GO" id="GO:0042773">
    <property type="term" value="P:ATP synthesis coupled electron transport"/>
    <property type="evidence" value="ECO:0007669"/>
    <property type="project" value="InterPro"/>
</dbReference>
<dbReference type="FunFam" id="1.10.287.3510:FF:000001">
    <property type="entry name" value="NADH-quinone oxidoreductase subunit K"/>
    <property type="match status" value="1"/>
</dbReference>
<dbReference type="Gene3D" id="1.10.287.3510">
    <property type="match status" value="1"/>
</dbReference>
<dbReference type="HAMAP" id="MF_01456">
    <property type="entry name" value="NDH1_NuoK"/>
    <property type="match status" value="1"/>
</dbReference>
<dbReference type="InterPro" id="IPR001133">
    <property type="entry name" value="NADH_UbQ_OxRdtase_chain4L/K"/>
</dbReference>
<dbReference type="InterPro" id="IPR039428">
    <property type="entry name" value="NUOK/Mnh_C1-like"/>
</dbReference>
<dbReference type="NCBIfam" id="NF004319">
    <property type="entry name" value="PRK05715.1-1"/>
    <property type="match status" value="1"/>
</dbReference>
<dbReference type="NCBIfam" id="NF004320">
    <property type="entry name" value="PRK05715.1-2"/>
    <property type="match status" value="1"/>
</dbReference>
<dbReference type="PANTHER" id="PTHR11434:SF16">
    <property type="entry name" value="NADH-UBIQUINONE OXIDOREDUCTASE CHAIN 4L"/>
    <property type="match status" value="1"/>
</dbReference>
<dbReference type="PANTHER" id="PTHR11434">
    <property type="entry name" value="NADH-UBIQUINONE OXIDOREDUCTASE SUBUNIT ND4L"/>
    <property type="match status" value="1"/>
</dbReference>
<dbReference type="Pfam" id="PF00420">
    <property type="entry name" value="Oxidored_q2"/>
    <property type="match status" value="1"/>
</dbReference>
<feature type="chain" id="PRO_0000390088" description="NADH-quinone oxidoreductase subunit K">
    <location>
        <begin position="1"/>
        <end position="100"/>
    </location>
</feature>
<feature type="transmembrane region" description="Helical" evidence="1">
    <location>
        <begin position="4"/>
        <end position="24"/>
    </location>
</feature>
<feature type="transmembrane region" description="Helical" evidence="1">
    <location>
        <begin position="28"/>
        <end position="48"/>
    </location>
</feature>
<feature type="transmembrane region" description="Helical" evidence="1">
    <location>
        <begin position="60"/>
        <end position="80"/>
    </location>
</feature>
<accession>C4K6N1</accession>
<evidence type="ECO:0000255" key="1">
    <source>
        <dbReference type="HAMAP-Rule" id="MF_01456"/>
    </source>
</evidence>
<proteinExistence type="inferred from homology"/>
<organism>
    <name type="scientific">Hamiltonella defensa subsp. Acyrthosiphon pisum (strain 5AT)</name>
    <dbReference type="NCBI Taxonomy" id="572265"/>
    <lineage>
        <taxon>Bacteria</taxon>
        <taxon>Pseudomonadati</taxon>
        <taxon>Pseudomonadota</taxon>
        <taxon>Gammaproteobacteria</taxon>
        <taxon>Enterobacterales</taxon>
        <taxon>Enterobacteriaceae</taxon>
        <taxon>aphid secondary symbionts</taxon>
        <taxon>Candidatus Hamiltonella</taxon>
    </lineage>
</organism>
<protein>
    <recommendedName>
        <fullName evidence="1">NADH-quinone oxidoreductase subunit K</fullName>
        <ecNumber evidence="1">7.1.1.-</ecNumber>
    </recommendedName>
    <alternativeName>
        <fullName evidence="1">NADH dehydrogenase I subunit K</fullName>
    </alternativeName>
    <alternativeName>
        <fullName evidence="1">NDH-1 subunit K</fullName>
    </alternativeName>
</protein>
<sequence>MIPMQHGLILAAILFTLGLTGLLIRRNLIFMLISLEVMINSAALAWVVAGSHWGHPDGQIFYLLAITLAAAEASIGLALLLQLYRRHHTLNIDILSEMRG</sequence>
<name>NUOK_HAMD5</name>
<comment type="function">
    <text evidence="1">NDH-1 shuttles electrons from NADH, via FMN and iron-sulfur (Fe-S) centers, to quinones in the respiratory chain. The immediate electron acceptor for the enzyme in this species is believed to be ubiquinone. Couples the redox reaction to proton translocation (for every two electrons transferred, four hydrogen ions are translocated across the cytoplasmic membrane), and thus conserves the redox energy in a proton gradient.</text>
</comment>
<comment type="catalytic activity">
    <reaction evidence="1">
        <text>a quinone + NADH + 5 H(+)(in) = a quinol + NAD(+) + 4 H(+)(out)</text>
        <dbReference type="Rhea" id="RHEA:57888"/>
        <dbReference type="ChEBI" id="CHEBI:15378"/>
        <dbReference type="ChEBI" id="CHEBI:24646"/>
        <dbReference type="ChEBI" id="CHEBI:57540"/>
        <dbReference type="ChEBI" id="CHEBI:57945"/>
        <dbReference type="ChEBI" id="CHEBI:132124"/>
    </reaction>
</comment>
<comment type="subunit">
    <text evidence="1">NDH-1 is composed of 13 different subunits. Subunits NuoA, H, J, K, L, M, N constitute the membrane sector of the complex.</text>
</comment>
<comment type="subcellular location">
    <subcellularLocation>
        <location evidence="1">Cell membrane</location>
        <topology evidence="1">Multi-pass membrane protein</topology>
    </subcellularLocation>
</comment>
<comment type="similarity">
    <text evidence="1">Belongs to the complex I subunit 4L family.</text>
</comment>
<gene>
    <name evidence="1" type="primary">nuoK</name>
    <name type="ordered locus">HDEF_1612</name>
</gene>
<keyword id="KW-1003">Cell membrane</keyword>
<keyword id="KW-0472">Membrane</keyword>
<keyword id="KW-0520">NAD</keyword>
<keyword id="KW-0874">Quinone</keyword>
<keyword id="KW-1278">Translocase</keyword>
<keyword id="KW-0812">Transmembrane</keyword>
<keyword id="KW-1133">Transmembrane helix</keyword>
<keyword id="KW-0813">Transport</keyword>
<keyword id="KW-0830">Ubiquinone</keyword>
<reference key="1">
    <citation type="journal article" date="2009" name="Proc. Natl. Acad. Sci. U.S.A.">
        <title>Hamiltonella defensa, genome evolution of protective bacterial endosymbiont from pathogenic ancestors.</title>
        <authorList>
            <person name="Degnan P.H."/>
            <person name="Yu Y."/>
            <person name="Sisneros N."/>
            <person name="Wing R.A."/>
            <person name="Moran N.A."/>
        </authorList>
    </citation>
    <scope>NUCLEOTIDE SEQUENCE [LARGE SCALE GENOMIC DNA]</scope>
    <source>
        <strain>5AT</strain>
    </source>
</reference>